<reference key="1">
    <citation type="journal article" date="2011" name="J. Bacteriol.">
        <title>Genome of Ochrobactrum anthropi ATCC 49188 T, a versatile opportunistic pathogen and symbiont of several eukaryotic hosts.</title>
        <authorList>
            <person name="Chain P.S."/>
            <person name="Lang D.M."/>
            <person name="Comerci D.J."/>
            <person name="Malfatti S.A."/>
            <person name="Vergez L.M."/>
            <person name="Shin M."/>
            <person name="Ugalde R.A."/>
            <person name="Garcia E."/>
            <person name="Tolmasky M.E."/>
        </authorList>
    </citation>
    <scope>NUCLEOTIDE SEQUENCE [LARGE SCALE GENOMIC DNA]</scope>
    <source>
        <strain>ATCC 49188 / DSM 6882 / CCUG 24695 / JCM 21032 / LMG 3331 / NBRC 15819 / NCTC 12168 / Alc 37</strain>
    </source>
</reference>
<name>AHPD_BRUA4</name>
<protein>
    <recommendedName>
        <fullName evidence="2">Alkyl hydroperoxide reductase AhpD</fullName>
        <ecNumber evidence="2">1.11.1.28</ecNumber>
    </recommendedName>
    <alternativeName>
        <fullName evidence="2">Alkylhydroperoxidase AhpD</fullName>
    </alternativeName>
</protein>
<dbReference type="EC" id="1.11.1.28" evidence="2"/>
<dbReference type="EMBL" id="CP000759">
    <property type="protein sequence ID" value="ABS16537.1"/>
    <property type="molecule type" value="Genomic_DNA"/>
</dbReference>
<dbReference type="RefSeq" id="WP_010659017.1">
    <property type="nucleotide sequence ID" value="NC_009668.1"/>
</dbReference>
<dbReference type="SMR" id="A6X5N3"/>
<dbReference type="STRING" id="439375.Oant_3831"/>
<dbReference type="KEGG" id="oan:Oant_3831"/>
<dbReference type="eggNOG" id="COG2128">
    <property type="taxonomic scope" value="Bacteria"/>
</dbReference>
<dbReference type="HOGENOM" id="CLU_105328_0_0_5"/>
<dbReference type="PhylomeDB" id="A6X5N3"/>
<dbReference type="Proteomes" id="UP000002301">
    <property type="component" value="Chromosome 2"/>
</dbReference>
<dbReference type="GO" id="GO:0008785">
    <property type="term" value="F:alkyl hydroperoxide reductase activity"/>
    <property type="evidence" value="ECO:0007669"/>
    <property type="project" value="UniProtKB-UniRule"/>
</dbReference>
<dbReference type="GO" id="GO:0015036">
    <property type="term" value="F:disulfide oxidoreductase activity"/>
    <property type="evidence" value="ECO:0007669"/>
    <property type="project" value="TreeGrafter"/>
</dbReference>
<dbReference type="GO" id="GO:0032843">
    <property type="term" value="F:hydroperoxide reductase activity"/>
    <property type="evidence" value="ECO:0007669"/>
    <property type="project" value="InterPro"/>
</dbReference>
<dbReference type="GO" id="GO:0051920">
    <property type="term" value="F:peroxiredoxin activity"/>
    <property type="evidence" value="ECO:0007669"/>
    <property type="project" value="InterPro"/>
</dbReference>
<dbReference type="GO" id="GO:0045454">
    <property type="term" value="P:cell redox homeostasis"/>
    <property type="evidence" value="ECO:0007669"/>
    <property type="project" value="TreeGrafter"/>
</dbReference>
<dbReference type="GO" id="GO:0006979">
    <property type="term" value="P:response to oxidative stress"/>
    <property type="evidence" value="ECO:0007669"/>
    <property type="project" value="InterPro"/>
</dbReference>
<dbReference type="Gene3D" id="1.20.1290.10">
    <property type="entry name" value="AhpD-like"/>
    <property type="match status" value="1"/>
</dbReference>
<dbReference type="HAMAP" id="MF_01676">
    <property type="entry name" value="AhpD"/>
    <property type="match status" value="1"/>
</dbReference>
<dbReference type="InterPro" id="IPR004674">
    <property type="entry name" value="AhpD"/>
</dbReference>
<dbReference type="InterPro" id="IPR029032">
    <property type="entry name" value="AhpD-like"/>
</dbReference>
<dbReference type="InterPro" id="IPR004675">
    <property type="entry name" value="AhpD_core"/>
</dbReference>
<dbReference type="InterPro" id="IPR003779">
    <property type="entry name" value="CMD-like"/>
</dbReference>
<dbReference type="NCBIfam" id="TIGR00777">
    <property type="entry name" value="ahpD"/>
    <property type="match status" value="1"/>
</dbReference>
<dbReference type="NCBIfam" id="TIGR00778">
    <property type="entry name" value="ahpD_dom"/>
    <property type="match status" value="1"/>
</dbReference>
<dbReference type="PANTHER" id="PTHR33930">
    <property type="entry name" value="ALKYL HYDROPEROXIDE REDUCTASE AHPD"/>
    <property type="match status" value="1"/>
</dbReference>
<dbReference type="PANTHER" id="PTHR33930:SF7">
    <property type="entry name" value="ALKYL HYDROPEROXIDE REDUCTASE AHPD"/>
    <property type="match status" value="1"/>
</dbReference>
<dbReference type="Pfam" id="PF02627">
    <property type="entry name" value="CMD"/>
    <property type="match status" value="1"/>
</dbReference>
<dbReference type="SUPFAM" id="SSF69118">
    <property type="entry name" value="AhpD-like"/>
    <property type="match status" value="1"/>
</dbReference>
<accession>A6X5N3</accession>
<gene>
    <name evidence="2" type="primary">ahpD</name>
    <name type="ordered locus">Oant_3831</name>
</gene>
<evidence type="ECO:0000250" key="1"/>
<evidence type="ECO:0000255" key="2">
    <source>
        <dbReference type="HAMAP-Rule" id="MF_01676"/>
    </source>
</evidence>
<feature type="chain" id="PRO_0000359503" description="Alkyl hydroperoxide reductase AhpD">
    <location>
        <begin position="1"/>
        <end position="175"/>
    </location>
</feature>
<feature type="active site" description="Proton donor" evidence="2">
    <location>
        <position position="131"/>
    </location>
</feature>
<feature type="active site" description="Cysteine sulfenic acid (-SOH) intermediate" evidence="2">
    <location>
        <position position="134"/>
    </location>
</feature>
<feature type="disulfide bond" evidence="1">
    <location>
        <begin position="131"/>
        <end position="134"/>
    </location>
</feature>
<feature type="disulfide bond" description="Interchain (with AhpC); in linked form" evidence="2">
    <location>
        <position position="134"/>
    </location>
</feature>
<keyword id="KW-0049">Antioxidant</keyword>
<keyword id="KW-1015">Disulfide bond</keyword>
<keyword id="KW-0560">Oxidoreductase</keyword>
<keyword id="KW-0575">Peroxidase</keyword>
<keyword id="KW-0676">Redox-active center</keyword>
<keyword id="KW-1185">Reference proteome</keyword>
<proteinExistence type="inferred from homology"/>
<comment type="function">
    <text evidence="2">Antioxidant protein with alkyl hydroperoxidase activity. Required for the reduction of the AhpC active site cysteine residues and for the regeneration of the AhpC enzyme activity.</text>
</comment>
<comment type="catalytic activity">
    <reaction evidence="2">
        <text>N(6)-[(R)-dihydrolipoyl]-L-lysyl-[lipoyl-carrier protein] + a hydroperoxide = N(6)-[(R)-lipoyl]-L-lysyl-[lipoyl-carrier protein] + an alcohol + H2O</text>
        <dbReference type="Rhea" id="RHEA:62636"/>
        <dbReference type="Rhea" id="RHEA-COMP:10502"/>
        <dbReference type="Rhea" id="RHEA-COMP:16355"/>
        <dbReference type="ChEBI" id="CHEBI:15377"/>
        <dbReference type="ChEBI" id="CHEBI:30879"/>
        <dbReference type="ChEBI" id="CHEBI:35924"/>
        <dbReference type="ChEBI" id="CHEBI:83099"/>
        <dbReference type="ChEBI" id="CHEBI:83100"/>
        <dbReference type="EC" id="1.11.1.28"/>
    </reaction>
</comment>
<comment type="similarity">
    <text evidence="2">Belongs to the AhpD family.</text>
</comment>
<organism>
    <name type="scientific">Brucella anthropi (strain ATCC 49188 / DSM 6882 / CCUG 24695 / JCM 21032 / LMG 3331 / NBRC 15819 / NCTC 12168 / Alc 37)</name>
    <name type="common">Ochrobactrum anthropi</name>
    <dbReference type="NCBI Taxonomy" id="439375"/>
    <lineage>
        <taxon>Bacteria</taxon>
        <taxon>Pseudomonadati</taxon>
        <taxon>Pseudomonadota</taxon>
        <taxon>Alphaproteobacteria</taxon>
        <taxon>Hyphomicrobiales</taxon>
        <taxon>Brucellaceae</taxon>
        <taxon>Brucella/Ochrobactrum group</taxon>
        <taxon>Brucella</taxon>
    </lineage>
</organism>
<sequence>MSIDDLKSKIPDFAKDVRLNLSSMASDETLTPQQKYGLFVACGIASRNADVRKALVAEAAAKVDASVIQAAKSAASIMGMNNVYYRFVHLATNKDYRTMPAKLRMNVIGNPGVDKIDFELWSLAVSAINGCGMCIDAHEDVLRKANVTSETIQTAVRFASIIQSVAIALEAADTE</sequence>